<dbReference type="GO" id="GO:0005576">
    <property type="term" value="C:extracellular region"/>
    <property type="evidence" value="ECO:0007669"/>
    <property type="project" value="UniProtKB-SubCell"/>
</dbReference>
<dbReference type="GO" id="GO:0007218">
    <property type="term" value="P:neuropeptide signaling pathway"/>
    <property type="evidence" value="ECO:0007669"/>
    <property type="project" value="UniProtKB-KW"/>
</dbReference>
<dbReference type="InterPro" id="IPR013231">
    <property type="entry name" value="Periviscerokinin"/>
</dbReference>
<dbReference type="Pfam" id="PF08259">
    <property type="entry name" value="Periviscerokin"/>
    <property type="match status" value="1"/>
</dbReference>
<sequence length="11" mass="1147">GSSGMIPFPRV</sequence>
<accession>P85658</accession>
<organism>
    <name type="scientific">Loboptera decipiens</name>
    <name type="common">Field cockroach</name>
    <dbReference type="NCBI Taxonomy" id="242713"/>
    <lineage>
        <taxon>Eukaryota</taxon>
        <taxon>Metazoa</taxon>
        <taxon>Ecdysozoa</taxon>
        <taxon>Arthropoda</taxon>
        <taxon>Hexapoda</taxon>
        <taxon>Insecta</taxon>
        <taxon>Pterygota</taxon>
        <taxon>Neoptera</taxon>
        <taxon>Polyneoptera</taxon>
        <taxon>Dictyoptera</taxon>
        <taxon>Blattodea</taxon>
        <taxon>Blaberoidea</taxon>
        <taxon>Blattellidae</taxon>
        <taxon>Loboptera</taxon>
    </lineage>
</organism>
<comment type="function">
    <text evidence="4">Mediates visceral muscle contractile activity (myotropic activity).</text>
</comment>
<comment type="subcellular location">
    <subcellularLocation>
        <location evidence="4">Secreted</location>
    </subcellularLocation>
</comment>
<comment type="similarity">
    <text evidence="1">Belongs to the periviscerokinin family.</text>
</comment>
<feature type="peptide" id="PRO_0000378838" description="Periviscerokinin-3" evidence="2">
    <location>
        <begin position="1"/>
        <end position="11"/>
    </location>
</feature>
<feature type="modified residue" description="Valine amide" evidence="2">
    <location>
        <position position="11"/>
    </location>
</feature>
<keyword id="KW-0027">Amidation</keyword>
<keyword id="KW-0903">Direct protein sequencing</keyword>
<keyword id="KW-0527">Neuropeptide</keyword>
<keyword id="KW-0964">Secreted</keyword>
<name>PVK3_LOBDE</name>
<evidence type="ECO:0000255" key="1"/>
<evidence type="ECO:0000269" key="2">
    <source>
    </source>
</evidence>
<evidence type="ECO:0000303" key="3">
    <source>
    </source>
</evidence>
<evidence type="ECO:0000305" key="4"/>
<proteinExistence type="evidence at protein level"/>
<reference evidence="4" key="1">
    <citation type="journal article" date="2009" name="BMC Evol. Biol.">
        <title>A proteomic approach for studying insect phylogeny: CAPA peptides of ancient insect taxa (Dictyoptera, Blattoptera) as a test case.</title>
        <authorList>
            <person name="Roth S."/>
            <person name="Fromm B."/>
            <person name="Gaede G."/>
            <person name="Predel R."/>
        </authorList>
    </citation>
    <scope>PROTEIN SEQUENCE</scope>
    <scope>AMIDATION AT VAL-11</scope>
    <source>
        <tissue evidence="2">Abdominal perisympathetic organs</tissue>
    </source>
</reference>
<protein>
    <recommendedName>
        <fullName evidence="3">Periviscerokinin-3</fullName>
        <shortName evidence="3">LobDe-PVK-3</shortName>
    </recommendedName>
</protein>